<gene>
    <name evidence="1" type="primary">NA</name>
</gene>
<keyword id="KW-0106">Calcium</keyword>
<keyword id="KW-1015">Disulfide bond</keyword>
<keyword id="KW-0325">Glycoprotein</keyword>
<keyword id="KW-0326">Glycosidase</keyword>
<keyword id="KW-1032">Host cell membrane</keyword>
<keyword id="KW-1043">Host membrane</keyword>
<keyword id="KW-0378">Hydrolase</keyword>
<keyword id="KW-0472">Membrane</keyword>
<keyword id="KW-0479">Metal-binding</keyword>
<keyword id="KW-0735">Signal-anchor</keyword>
<keyword id="KW-0812">Transmembrane</keyword>
<keyword id="KW-1133">Transmembrane helix</keyword>
<keyword id="KW-0946">Virion</keyword>
<name>NRAM_I77AB</name>
<dbReference type="EC" id="3.2.1.18" evidence="1"/>
<dbReference type="EMBL" id="K02018">
    <property type="protein sequence ID" value="AAA43449.1"/>
    <property type="molecule type" value="Genomic_RNA"/>
</dbReference>
<dbReference type="EMBL" id="CY010374">
    <property type="protein sequence ID" value="ABD95353.1"/>
    <property type="molecule type" value="Genomic_RNA"/>
</dbReference>
<dbReference type="EMBL" id="DQ508899">
    <property type="protein sequence ID" value="ABF21333.1"/>
    <property type="molecule type" value="Genomic_RNA"/>
</dbReference>
<dbReference type="EMBL" id="J02564">
    <property type="protein sequence ID" value="AAA43420.1"/>
    <property type="molecule type" value="Genomic_RNA"/>
</dbReference>
<dbReference type="EMBL" id="K01038">
    <property type="protein sequence ID" value="AAA43447.1"/>
    <property type="molecule type" value="Genomic_RNA"/>
</dbReference>
<dbReference type="SMR" id="P03469"/>
<dbReference type="BindingDB" id="P03469"/>
<dbReference type="ChEMBL" id="CHEMBL3559643"/>
<dbReference type="DrugCentral" id="P03469"/>
<dbReference type="CAZy" id="GH34">
    <property type="family name" value="Glycoside Hydrolase Family 34"/>
</dbReference>
<dbReference type="GlyCosmos" id="P03469">
    <property type="glycosylation" value="9 sites, No reported glycans"/>
</dbReference>
<dbReference type="SABIO-RK" id="P03469"/>
<dbReference type="PRO" id="PR:P03469"/>
<dbReference type="Proteomes" id="UP000007793">
    <property type="component" value="Genome"/>
</dbReference>
<dbReference type="Proteomes" id="UP000121508">
    <property type="component" value="Genome"/>
</dbReference>
<dbReference type="GO" id="GO:0020002">
    <property type="term" value="C:host cell plasma membrane"/>
    <property type="evidence" value="ECO:0007669"/>
    <property type="project" value="UniProtKB-SubCell"/>
</dbReference>
<dbReference type="GO" id="GO:0016020">
    <property type="term" value="C:membrane"/>
    <property type="evidence" value="ECO:0007669"/>
    <property type="project" value="UniProtKB-UniRule"/>
</dbReference>
<dbReference type="GO" id="GO:0055036">
    <property type="term" value="C:virion membrane"/>
    <property type="evidence" value="ECO:0007669"/>
    <property type="project" value="UniProtKB-SubCell"/>
</dbReference>
<dbReference type="GO" id="GO:0004308">
    <property type="term" value="F:exo-alpha-sialidase activity"/>
    <property type="evidence" value="ECO:0007669"/>
    <property type="project" value="UniProtKB-UniRule"/>
</dbReference>
<dbReference type="GO" id="GO:0046872">
    <property type="term" value="F:metal ion binding"/>
    <property type="evidence" value="ECO:0007669"/>
    <property type="project" value="UniProtKB-UniRule"/>
</dbReference>
<dbReference type="GO" id="GO:0005975">
    <property type="term" value="P:carbohydrate metabolic process"/>
    <property type="evidence" value="ECO:0007669"/>
    <property type="project" value="InterPro"/>
</dbReference>
<dbReference type="GO" id="GO:0046761">
    <property type="term" value="P:viral budding from plasma membrane"/>
    <property type="evidence" value="ECO:0007669"/>
    <property type="project" value="UniProtKB-UniRule"/>
</dbReference>
<dbReference type="CDD" id="cd15483">
    <property type="entry name" value="Influenza_NA"/>
    <property type="match status" value="1"/>
</dbReference>
<dbReference type="FunFam" id="2.120.10.10:FF:000001">
    <property type="entry name" value="Neuraminidase"/>
    <property type="match status" value="1"/>
</dbReference>
<dbReference type="Gene3D" id="2.120.10.10">
    <property type="match status" value="1"/>
</dbReference>
<dbReference type="HAMAP" id="MF_04071">
    <property type="entry name" value="INFV_NRAM"/>
    <property type="match status" value="1"/>
</dbReference>
<dbReference type="InterPro" id="IPR001860">
    <property type="entry name" value="Glyco_hydro_34"/>
</dbReference>
<dbReference type="InterPro" id="IPR033654">
    <property type="entry name" value="Sialidase_Influenza_A/B"/>
</dbReference>
<dbReference type="InterPro" id="IPR036278">
    <property type="entry name" value="Sialidase_sf"/>
</dbReference>
<dbReference type="Pfam" id="PF00064">
    <property type="entry name" value="Neur"/>
    <property type="match status" value="1"/>
</dbReference>
<dbReference type="SUPFAM" id="SSF50939">
    <property type="entry name" value="Sialidases"/>
    <property type="match status" value="1"/>
</dbReference>
<proteinExistence type="inferred from homology"/>
<reference key="1">
    <citation type="journal article" date="1984" name="J. Virol.">
        <title>Nucleotide sequence of the influenza virus A/USSR/90/77 neuraminidase gene.</title>
        <authorList>
            <person name="Concannon P."/>
            <person name="Kwolek C.J."/>
            <person name="Salser W.A."/>
        </authorList>
    </citation>
    <scope>NUCLEOTIDE SEQUENCE [GENOMIC RNA]</scope>
</reference>
<reference key="2">
    <citation type="submission" date="2006-03" db="EMBL/GenBank/DDBJ databases">
        <title>The NIAID influenza genome sequencing project.</title>
        <authorList>
            <person name="Ghedin E."/>
            <person name="Spiro D."/>
            <person name="Miller N."/>
            <person name="Zaborsky J."/>
            <person name="Feldblyum T."/>
            <person name="Subbu V."/>
            <person name="Shumway M."/>
            <person name="Sparenborg J."/>
            <person name="Groveman L."/>
            <person name="Halpin R."/>
            <person name="Sitz J."/>
            <person name="Koo H."/>
            <person name="Salzberg S.L."/>
            <person name="Webster R.G."/>
            <person name="Hoffmann E."/>
            <person name="Krauss S."/>
            <person name="Naeve C."/>
            <person name="Bao Y."/>
            <person name="Bolotov P."/>
            <person name="Dernovoy D."/>
            <person name="Kiryutin B."/>
            <person name="Lipman D.J."/>
            <person name="Tatusova T."/>
        </authorList>
    </citation>
    <scope>NUCLEOTIDE SEQUENCE [GENOMIC RNA]</scope>
</reference>
<reference key="3">
    <citation type="submission" date="2006-04" db="EMBL/GenBank/DDBJ databases">
        <title>Complete genome sequencing and analysis of selected influenza virus vaccine strains spanning six decades (1933-1999).</title>
        <authorList>
            <person name="Mbawuike I.N."/>
            <person name="Zhang Y."/>
            <person name="Yamada R.E."/>
            <person name="Nino D."/>
            <person name="Bui H.-H."/>
            <person name="Sette A."/>
            <person name="Couch R.B."/>
        </authorList>
    </citation>
    <scope>NUCLEOTIDE SEQUENCE [GENOMIC RNA]</scope>
</reference>
<reference key="4">
    <citation type="journal article" date="1982" name="Virology">
        <title>Block deletions in the neuraminidase genes from some influenza A viruses of the N1 subtype.</title>
        <authorList>
            <person name="Blok J."/>
            <person name="Air G.M."/>
        </authorList>
    </citation>
    <scope>NUCLEOTIDE SEQUENCE [GENOMIC RNA] OF 41-86</scope>
</reference>
<reference key="5">
    <citation type="journal article" date="1982" name="Virology">
        <title>Sequence variation at the 3' end of the neuraminidase gene from 39 influenza type A viruses.</title>
        <authorList>
            <person name="Blok J."/>
            <person name="Air G.M."/>
        </authorList>
    </citation>
    <scope>NUCLEOTIDE SEQUENCE [GENOMIC RNA] OF 1-86</scope>
</reference>
<reference key="6">
    <citation type="journal article" date="2004" name="Virus Res.">
        <title>Assembly and budding of influenza virus.</title>
        <authorList>
            <person name="Nayak D.P."/>
            <person name="Hui E.K."/>
            <person name="Barman S."/>
        </authorList>
    </citation>
    <scope>REVIEW</scope>
</reference>
<reference key="7">
    <citation type="journal article" date="2005" name="N. Engl. J. Med.">
        <title>Neuraminidase inhibitors for influenza.</title>
        <authorList>
            <person name="Moscona A."/>
        </authorList>
    </citation>
    <scope>REVIEW</scope>
</reference>
<reference key="8">
    <citation type="journal article" date="2005" name="Biol. Pharm. Bull.">
        <title>Sialobiology of influenza: molecular mechanism of host range variation of influenza viruses.</title>
        <authorList>
            <person name="Suzuki Y."/>
        </authorList>
    </citation>
    <scope>REVIEW</scope>
</reference>
<protein>
    <recommendedName>
        <fullName evidence="1">Neuraminidase</fullName>
        <ecNumber evidence="1">3.2.1.18</ecNumber>
    </recommendedName>
</protein>
<evidence type="ECO:0000255" key="1">
    <source>
        <dbReference type="HAMAP-Rule" id="MF_04071"/>
    </source>
</evidence>
<organismHost>
    <name type="scientific">Aves</name>
    <dbReference type="NCBI Taxonomy" id="8782"/>
</organismHost>
<organismHost>
    <name type="scientific">Homo sapiens</name>
    <name type="common">Human</name>
    <dbReference type="NCBI Taxonomy" id="9606"/>
</organismHost>
<organismHost>
    <name type="scientific">Sus scrofa</name>
    <name type="common">Pig</name>
    <dbReference type="NCBI Taxonomy" id="9823"/>
</organismHost>
<comment type="function">
    <text evidence="1">Catalyzes the removal of terminal sialic acid residues from viral and cellular glycoconjugates. Cleaves off the terminal sialic acids on the glycosylated HA during virus budding to facilitate virus release. Additionally helps virus spread through the circulation by further removing sialic acids from the cell surface. These cleavages prevent self-aggregation and ensure the efficient spread of the progeny virus from cell to cell. Otherwise, infection would be limited to one round of replication. Described as a receptor-destroying enzyme because it cleaves a terminal sialic acid from the cellular receptors. May facilitate viral invasion of the upper airways by cleaving the sialic acid moieties on the mucin of the airway epithelial cells. Likely to plays a role in the budding process through its association with lipid rafts during intracellular transport. May additionally display a raft-association independent effect on budding. Plays a role in the determination of host range restriction on replication and virulence. Sialidase activity in late endosome/lysosome traffic seems to enhance virus replication.</text>
</comment>
<comment type="catalytic activity">
    <reaction evidence="1">
        <text>Hydrolysis of alpha-(2-&gt;3)-, alpha-(2-&gt;6)-, alpha-(2-&gt;8)- glycosidic linkages of terminal sialic acid residues in oligosaccharides, glycoproteins, glycolipids, colominic acid and synthetic substrates.</text>
        <dbReference type="EC" id="3.2.1.18"/>
    </reaction>
</comment>
<comment type="cofactor">
    <cofactor evidence="1">
        <name>Ca(2+)</name>
        <dbReference type="ChEBI" id="CHEBI:29108"/>
    </cofactor>
</comment>
<comment type="activity regulation">
    <text evidence="1">Inhibited by the neuraminidase inhibitors zanamivir (Relenza) and oseltamivir (Tamiflu). These drugs interfere with the release of progeny virus from infected cells and are effective against all influenza strains. Resistance to neuraminidase inhibitors is quite rare.</text>
</comment>
<comment type="subunit">
    <text evidence="1">Homotetramer.</text>
</comment>
<comment type="subcellular location">
    <subcellularLocation>
        <location evidence="1">Virion membrane</location>
    </subcellularLocation>
    <subcellularLocation>
        <location evidence="1">Host apical cell membrane</location>
        <topology evidence="1">Single-pass type II membrane protein</topology>
    </subcellularLocation>
    <text evidence="1">Preferentially accumulates at the apical plasma membrane in infected polarized epithelial cells, which is the virus assembly site. Uses lipid rafts for cell surface transport and apical sorting. In the virion, forms a mushroom-shaped spike on the surface of the membrane.</text>
</comment>
<comment type="domain">
    <text evidence="1">Intact N-terminus is essential for virion morphogenesis. Possesses two apical sorting signals, one in the ectodomain, which is likely to be a glycan, and the other in the transmembrane domain. The transmembrane domain also plays a role in lipid raft association.</text>
</comment>
<comment type="PTM">
    <text evidence="1">N-glycosylated.</text>
</comment>
<comment type="miscellaneous">
    <text>The influenza A genome consist of 8 RNA segments. Genetic variation of hemagglutinin and/or neuraminidase genes results in the emergence of new influenza strains. The mechanism of variation can be the result of point mutations or the result of genetic reassortment between segments of two different strains.</text>
</comment>
<comment type="similarity">
    <text evidence="1">Belongs to the glycosyl hydrolase 34 family.</text>
</comment>
<accession>P03469</accession>
<accession>Q1WP06</accession>
<accession>Q83958</accession>
<accession>Q83959</accession>
<feature type="chain" id="PRO_0000078723" description="Neuraminidase">
    <location>
        <begin position="1"/>
        <end position="470"/>
    </location>
</feature>
<feature type="topological domain" description="Intravirion" evidence="1">
    <location>
        <begin position="1"/>
        <end position="6"/>
    </location>
</feature>
<feature type="transmembrane region" description="Helical" evidence="1">
    <location>
        <begin position="7"/>
        <end position="27"/>
    </location>
</feature>
<feature type="topological domain" description="Virion surface" evidence="1">
    <location>
        <begin position="28"/>
        <end position="470"/>
    </location>
</feature>
<feature type="region of interest" description="Involved in apical transport and lipid raft association" evidence="1">
    <location>
        <begin position="11"/>
        <end position="33"/>
    </location>
</feature>
<feature type="region of interest" description="Hypervariable stalk region" evidence="1">
    <location>
        <begin position="36"/>
        <end position="90"/>
    </location>
</feature>
<feature type="region of interest" description="Head of neuraminidase" evidence="1">
    <location>
        <begin position="91"/>
        <end position="470"/>
    </location>
</feature>
<feature type="active site" description="Proton donor/acceptor" evidence="1">
    <location>
        <position position="151"/>
    </location>
</feature>
<feature type="active site" description="Nucleophile" evidence="1">
    <location>
        <position position="402"/>
    </location>
</feature>
<feature type="binding site" evidence="1">
    <location>
        <position position="118"/>
    </location>
    <ligand>
        <name>substrate</name>
    </ligand>
</feature>
<feature type="binding site" evidence="1">
    <location>
        <position position="152"/>
    </location>
    <ligand>
        <name>substrate</name>
    </ligand>
</feature>
<feature type="binding site" evidence="1">
    <location>
        <begin position="277"/>
        <end position="278"/>
    </location>
    <ligand>
        <name>substrate</name>
    </ligand>
</feature>
<feature type="binding site" evidence="1">
    <location>
        <position position="293"/>
    </location>
    <ligand>
        <name>substrate</name>
    </ligand>
</feature>
<feature type="binding site" evidence="1">
    <location>
        <position position="294"/>
    </location>
    <ligand>
        <name>Ca(2+)</name>
        <dbReference type="ChEBI" id="CHEBI:29108"/>
    </ligand>
</feature>
<feature type="binding site" evidence="1">
    <location>
        <position position="298"/>
    </location>
    <ligand>
        <name>Ca(2+)</name>
        <dbReference type="ChEBI" id="CHEBI:29108"/>
    </ligand>
</feature>
<feature type="binding site" evidence="1">
    <location>
        <position position="324"/>
    </location>
    <ligand>
        <name>Ca(2+)</name>
        <dbReference type="ChEBI" id="CHEBI:29108"/>
    </ligand>
</feature>
<feature type="binding site" evidence="1">
    <location>
        <position position="368"/>
    </location>
    <ligand>
        <name>substrate</name>
    </ligand>
</feature>
<feature type="glycosylation site" description="N-linked (GlcNAc...) asparagine; by host" evidence="1">
    <location>
        <position position="44"/>
    </location>
</feature>
<feature type="glycosylation site" description="N-linked (GlcNAc...) asparagine; by host" evidence="1">
    <location>
        <position position="58"/>
    </location>
</feature>
<feature type="glycosylation site" description="N-linked (GlcNAc...) asparagine; by host" evidence="1">
    <location>
        <position position="63"/>
    </location>
</feature>
<feature type="glycosylation site" description="N-linked (GlcNAc...) asparagine; by host" evidence="1">
    <location>
        <position position="68"/>
    </location>
</feature>
<feature type="glycosylation site" description="N-linked (GlcNAc...) asparagine; by host" evidence="1">
    <location>
        <position position="88"/>
    </location>
</feature>
<feature type="glycosylation site" description="N-linked (GlcNAc...) asparagine; by host" evidence="1">
    <location>
        <position position="146"/>
    </location>
</feature>
<feature type="glycosylation site" description="N-linked (GlcNAc...) asparagine; by host" evidence="1">
    <location>
        <position position="235"/>
    </location>
</feature>
<feature type="glycosylation site" description="N-linked (GlcNAc...) asparagine; by host" evidence="1">
    <location>
        <position position="365"/>
    </location>
</feature>
<feature type="glycosylation site" description="N-linked (GlcNAc...) asparagine; by host" evidence="1">
    <location>
        <position position="455"/>
    </location>
</feature>
<feature type="disulfide bond" evidence="1">
    <location>
        <begin position="92"/>
        <end position="417"/>
    </location>
</feature>
<feature type="disulfide bond" evidence="1">
    <location>
        <begin position="124"/>
        <end position="129"/>
    </location>
</feature>
<feature type="disulfide bond" evidence="1">
    <location>
        <begin position="184"/>
        <end position="231"/>
    </location>
</feature>
<feature type="disulfide bond" evidence="1">
    <location>
        <begin position="233"/>
        <end position="238"/>
    </location>
</feature>
<feature type="disulfide bond" evidence="1">
    <location>
        <begin position="279"/>
        <end position="292"/>
    </location>
</feature>
<feature type="disulfide bond" evidence="1">
    <location>
        <begin position="281"/>
        <end position="290"/>
    </location>
</feature>
<feature type="disulfide bond" evidence="1">
    <location>
        <begin position="318"/>
        <end position="335"/>
    </location>
</feature>
<feature type="disulfide bond" evidence="1">
    <location>
        <begin position="421"/>
        <end position="447"/>
    </location>
</feature>
<feature type="sequence conflict" description="In Ref. 4; AAA43420 and 5; AAA43447." ref="4 5">
    <original>I</original>
    <variation>T</variation>
    <location>
        <position position="48"/>
    </location>
</feature>
<feature type="sequence conflict" description="In Ref. 4; AAA43420 and 5; AAA43447." ref="4 5">
    <original>Q</original>
    <variation>H</variation>
    <location>
        <position position="51"/>
    </location>
</feature>
<feature type="sequence conflict" description="In Ref. 1; AAA43449." ref="1">
    <original>H</original>
    <variation>Y</variation>
    <location>
        <position position="185"/>
    </location>
</feature>
<feature type="sequence conflict" description="In Ref. 1; AAA43449." ref="1">
    <original>W</original>
    <variation>C</variation>
    <location>
        <position position="190"/>
    </location>
</feature>
<feature type="sequence conflict" description="In Ref. 1; AAA43449." ref="1">
    <original>S</original>
    <variation>R</variation>
    <location>
        <position position="334"/>
    </location>
</feature>
<feature type="sequence conflict" description="In Ref. 1; AAA43449." ref="1">
    <original>V</original>
    <variation>G</variation>
    <location>
        <position position="357"/>
    </location>
</feature>
<feature type="sequence conflict" description="In Ref. 1; AAA43449." ref="1">
    <original>T</original>
    <variation>P</variation>
    <location>
        <position position="383"/>
    </location>
</feature>
<feature type="sequence conflict" description="In Ref. 1; AAA43449." ref="1">
    <original>V</original>
    <variation>I</variation>
    <location>
        <position position="393"/>
    </location>
</feature>
<feature type="sequence conflict" description="In Ref. 1; AAA43449." ref="1">
    <original>S</original>
    <variation>R</variation>
    <location>
        <position position="405"/>
    </location>
</feature>
<feature type="sequence conflict" description="In Ref. 1; AAA43449." ref="1">
    <original>G</original>
    <variation>D</variation>
    <location>
        <position position="461"/>
    </location>
</feature>
<feature type="sequence conflict" description="In Ref. 1; AAA43449." ref="1">
    <original>F</original>
    <variation>L</variation>
    <location>
        <position position="466"/>
    </location>
</feature>
<sequence>MNPNQKIITIGSICMAIGIISLILQIGNIISIWVSHSIQTGSQNHTGICNQRIITYENSTWVNQTYVNISNTNVVAGKDTTSMTLAGNSSLCPIRGWAIYSKDNSIRIGSKGDVFVIREPFISCSHLECRTFFLTQGALLNDKHSNGTVKDRSPYRALMSCPIGEAPSPYNSRFESVAWSASACHDGMGWLTIGISGPDDGAVAVLKYNGIITETIKSWRKQILRTQESECVCVNGSCFTIMTDGPSDGPASYRIFKIEKGKITKSIELDAPNSHYEECSCYPDTGTVMCVCRDNWHGSNRPWVSFNQNLDYQIGYICSGVFGDNPRPKDGKGSCDPVNVDGADGVKGFSYRYGNGVWIGRTKSNSSRKGFEMIWDPNGWTDTDSNFLVKQDVVAMTDWSGYSGSFVQHPELTGLDCMRPCFWVELIRGRPREKTTIWTSGSSISFCGVNSDTVNWSWPDGAELPFTIDK</sequence>
<organism>
    <name type="scientific">Influenza A virus (strain A/USSR/90/1977 H1N1)</name>
    <dbReference type="NCBI Taxonomy" id="381516"/>
    <lineage>
        <taxon>Viruses</taxon>
        <taxon>Riboviria</taxon>
        <taxon>Orthornavirae</taxon>
        <taxon>Negarnaviricota</taxon>
        <taxon>Polyploviricotina</taxon>
        <taxon>Insthoviricetes</taxon>
        <taxon>Articulavirales</taxon>
        <taxon>Orthomyxoviridae</taxon>
        <taxon>Alphainfluenzavirus</taxon>
        <taxon>Alphainfluenzavirus influenzae</taxon>
        <taxon>Influenza A virus</taxon>
    </lineage>
</organism>